<protein>
    <recommendedName>
        <fullName evidence="1">Small ribosomal subunit protein uS17</fullName>
    </recommendedName>
    <alternativeName>
        <fullName evidence="2">30S ribosomal protein S17</fullName>
    </alternativeName>
</protein>
<proteinExistence type="inferred from homology"/>
<sequence>MSDKIRTLQGRVTSNKMDKSITVAIERQVKHPIYGKYIKRTTKIHAHDETNQCNEGDLVAIRECRPLSKTKSWTLVEVVSKA</sequence>
<organism>
    <name type="scientific">Shewanella baltica (strain OS223)</name>
    <dbReference type="NCBI Taxonomy" id="407976"/>
    <lineage>
        <taxon>Bacteria</taxon>
        <taxon>Pseudomonadati</taxon>
        <taxon>Pseudomonadota</taxon>
        <taxon>Gammaproteobacteria</taxon>
        <taxon>Alteromonadales</taxon>
        <taxon>Shewanellaceae</taxon>
        <taxon>Shewanella</taxon>
    </lineage>
</organism>
<accession>B8EBJ6</accession>
<name>RS17_SHEB2</name>
<evidence type="ECO:0000255" key="1">
    <source>
        <dbReference type="HAMAP-Rule" id="MF_01345"/>
    </source>
</evidence>
<evidence type="ECO:0000305" key="2"/>
<feature type="chain" id="PRO_1000166495" description="Small ribosomal subunit protein uS17">
    <location>
        <begin position="1"/>
        <end position="82"/>
    </location>
</feature>
<comment type="function">
    <text evidence="1">One of the primary rRNA binding proteins, it binds specifically to the 5'-end of 16S ribosomal RNA.</text>
</comment>
<comment type="subunit">
    <text evidence="1">Part of the 30S ribosomal subunit.</text>
</comment>
<comment type="similarity">
    <text evidence="1">Belongs to the universal ribosomal protein uS17 family.</text>
</comment>
<reference key="1">
    <citation type="submission" date="2008-12" db="EMBL/GenBank/DDBJ databases">
        <title>Complete sequence of chromosome of Shewanella baltica OS223.</title>
        <authorList>
            <consortium name="US DOE Joint Genome Institute"/>
            <person name="Lucas S."/>
            <person name="Copeland A."/>
            <person name="Lapidus A."/>
            <person name="Glavina del Rio T."/>
            <person name="Dalin E."/>
            <person name="Tice H."/>
            <person name="Bruce D."/>
            <person name="Goodwin L."/>
            <person name="Pitluck S."/>
            <person name="Chertkov O."/>
            <person name="Meincke L."/>
            <person name="Brettin T."/>
            <person name="Detter J.C."/>
            <person name="Han C."/>
            <person name="Kuske C.R."/>
            <person name="Larimer F."/>
            <person name="Land M."/>
            <person name="Hauser L."/>
            <person name="Kyrpides N."/>
            <person name="Ovchinnikova G."/>
            <person name="Brettar I."/>
            <person name="Rodrigues J."/>
            <person name="Konstantinidis K."/>
            <person name="Tiedje J."/>
        </authorList>
    </citation>
    <scope>NUCLEOTIDE SEQUENCE [LARGE SCALE GENOMIC DNA]</scope>
    <source>
        <strain>OS223</strain>
    </source>
</reference>
<dbReference type="EMBL" id="CP001252">
    <property type="protein sequence ID" value="ACK48520.1"/>
    <property type="molecule type" value="Genomic_DNA"/>
</dbReference>
<dbReference type="RefSeq" id="WP_006083591.1">
    <property type="nucleotide sequence ID" value="NC_011663.1"/>
</dbReference>
<dbReference type="SMR" id="B8EBJ6"/>
<dbReference type="GeneID" id="67441769"/>
<dbReference type="KEGG" id="sbp:Sbal223_4047"/>
<dbReference type="HOGENOM" id="CLU_073626_1_1_6"/>
<dbReference type="Proteomes" id="UP000002507">
    <property type="component" value="Chromosome"/>
</dbReference>
<dbReference type="GO" id="GO:0022627">
    <property type="term" value="C:cytosolic small ribosomal subunit"/>
    <property type="evidence" value="ECO:0007669"/>
    <property type="project" value="TreeGrafter"/>
</dbReference>
<dbReference type="GO" id="GO:0019843">
    <property type="term" value="F:rRNA binding"/>
    <property type="evidence" value="ECO:0007669"/>
    <property type="project" value="UniProtKB-UniRule"/>
</dbReference>
<dbReference type="GO" id="GO:0003735">
    <property type="term" value="F:structural constituent of ribosome"/>
    <property type="evidence" value="ECO:0007669"/>
    <property type="project" value="InterPro"/>
</dbReference>
<dbReference type="GO" id="GO:0006412">
    <property type="term" value="P:translation"/>
    <property type="evidence" value="ECO:0007669"/>
    <property type="project" value="UniProtKB-UniRule"/>
</dbReference>
<dbReference type="CDD" id="cd00364">
    <property type="entry name" value="Ribosomal_uS17"/>
    <property type="match status" value="1"/>
</dbReference>
<dbReference type="FunFam" id="2.40.50.140:FF:000014">
    <property type="entry name" value="30S ribosomal protein S17"/>
    <property type="match status" value="1"/>
</dbReference>
<dbReference type="Gene3D" id="2.40.50.140">
    <property type="entry name" value="Nucleic acid-binding proteins"/>
    <property type="match status" value="1"/>
</dbReference>
<dbReference type="HAMAP" id="MF_01345_B">
    <property type="entry name" value="Ribosomal_uS17_B"/>
    <property type="match status" value="1"/>
</dbReference>
<dbReference type="InterPro" id="IPR012340">
    <property type="entry name" value="NA-bd_OB-fold"/>
</dbReference>
<dbReference type="InterPro" id="IPR000266">
    <property type="entry name" value="Ribosomal_uS17"/>
</dbReference>
<dbReference type="InterPro" id="IPR019984">
    <property type="entry name" value="Ribosomal_uS17_bact/chlr"/>
</dbReference>
<dbReference type="InterPro" id="IPR019979">
    <property type="entry name" value="Ribosomal_uS17_CS"/>
</dbReference>
<dbReference type="NCBIfam" id="NF004123">
    <property type="entry name" value="PRK05610.1"/>
    <property type="match status" value="1"/>
</dbReference>
<dbReference type="NCBIfam" id="TIGR03635">
    <property type="entry name" value="uS17_bact"/>
    <property type="match status" value="1"/>
</dbReference>
<dbReference type="PANTHER" id="PTHR10744">
    <property type="entry name" value="40S RIBOSOMAL PROTEIN S11 FAMILY MEMBER"/>
    <property type="match status" value="1"/>
</dbReference>
<dbReference type="PANTHER" id="PTHR10744:SF1">
    <property type="entry name" value="SMALL RIBOSOMAL SUBUNIT PROTEIN US17M"/>
    <property type="match status" value="1"/>
</dbReference>
<dbReference type="Pfam" id="PF00366">
    <property type="entry name" value="Ribosomal_S17"/>
    <property type="match status" value="1"/>
</dbReference>
<dbReference type="PRINTS" id="PR00973">
    <property type="entry name" value="RIBOSOMALS17"/>
</dbReference>
<dbReference type="SUPFAM" id="SSF50249">
    <property type="entry name" value="Nucleic acid-binding proteins"/>
    <property type="match status" value="1"/>
</dbReference>
<dbReference type="PROSITE" id="PS00056">
    <property type="entry name" value="RIBOSOMAL_S17"/>
    <property type="match status" value="1"/>
</dbReference>
<gene>
    <name evidence="1" type="primary">rpsQ</name>
    <name type="ordered locus">Sbal223_4047</name>
</gene>
<keyword id="KW-0687">Ribonucleoprotein</keyword>
<keyword id="KW-0689">Ribosomal protein</keyword>
<keyword id="KW-0694">RNA-binding</keyword>
<keyword id="KW-0699">rRNA-binding</keyword>